<comment type="function">
    <text evidence="1">UDP-glucosyltransferase; part of the cluster that mediates the biosynthesis of a highly modified cyclo-arginine-tryptophan dipeptide (cRW) (PubMed:36702957). The first step of the pathway is perfornmed by the arginine-containing cyclodipeptide synthase (RCPDS) avaA that acts as the scaffold-generating enzyme and is responsible for formation of the cyclo-Arg-Trp (cRW) diketopiperazine. AvaB then acts as a multifunctional flavoenzyme that is responsible for generating the cyclo-Arg-formylkynurenine DKP, which can be deformylated by avaC. AvaB then further catalyzes an additional N-oxidation followed by cyclization and dehydration. The next step is an N-acetylation of the guanidine group catalyzed by the arginine N-acetyltransferase avaD. The roles of the additional enzymes identified within the ava cluster still have to be determined (PubMed:36702957).</text>
</comment>
<comment type="pathway">
    <text evidence="4">Secondary metabolite biosynthesis.</text>
</comment>
<comment type="similarity">
    <text evidence="3">Belongs to the UDP-glycosyltransferase family.</text>
</comment>
<sequence>MGSIQTSKDQIHVIIGSTHRFSHLEKAKVIGAHLIKRGYRVTILAGPSVRDEVESIGALFAPMQGRAGGSPIKPAYNQPPPPWAEEMEVSALKNFFIGPIPDEYKSVQDVLKTLRETEGEETKVVYMDDIICGAMLPVYFGAPGAIRPKGVIKIGTTPLPHESAGTPTWTLGIPSPSTDSGSVGDLWGTKKEIYTSDDIQGHFENVLREMGIPADNLKPGSLPRFMHSQGTCCDAYLSLSIPEFEFPRSDAPESIQFVGALPTVGSVPSNLPEWWDEVIHAQGPAKKPIVVVSQGAVNNDPTDLILPTIEALKDEDVAVIATLVRGPKIEVDLPSNVKLAEFIPFDILLRHTDVLVSNGGFGTVQMALSLGVPMVLAGVYLDKYYTNSRAASMGAAINLGCERVEPSVVKTAVCDILSDQKRKERCLQIKEKYAEYNALDKIVDYVDALASKP</sequence>
<proteinExistence type="inferred from homology"/>
<organism>
    <name type="scientific">Aspergillus versicolor</name>
    <dbReference type="NCBI Taxonomy" id="46472"/>
    <lineage>
        <taxon>Eukaryota</taxon>
        <taxon>Fungi</taxon>
        <taxon>Dikarya</taxon>
        <taxon>Ascomycota</taxon>
        <taxon>Pezizomycotina</taxon>
        <taxon>Eurotiomycetes</taxon>
        <taxon>Eurotiomycetidae</taxon>
        <taxon>Eurotiales</taxon>
        <taxon>Aspergillaceae</taxon>
        <taxon>Aspergillus</taxon>
        <taxon>Aspergillus subgen. Nidulantes</taxon>
    </lineage>
</organism>
<evidence type="ECO:0000269" key="1">
    <source>
    </source>
</evidence>
<evidence type="ECO:0000303" key="2">
    <source>
    </source>
</evidence>
<evidence type="ECO:0000305" key="3"/>
<evidence type="ECO:0000305" key="4">
    <source>
    </source>
</evidence>
<keyword id="KW-0328">Glycosyltransferase</keyword>
<keyword id="KW-0808">Transferase</keyword>
<gene>
    <name evidence="2" type="primary">avaP</name>
</gene>
<name>AVAP_ASPVE</name>
<dbReference type="EC" id="2.4.1.-" evidence="3"/>
<dbReference type="EMBL" id="OP596311">
    <property type="protein sequence ID" value="UZP48228.1"/>
    <property type="molecule type" value="Genomic_DNA"/>
</dbReference>
<dbReference type="SMR" id="P9WEL7"/>
<dbReference type="GO" id="GO:0016758">
    <property type="term" value="F:hexosyltransferase activity"/>
    <property type="evidence" value="ECO:0007669"/>
    <property type="project" value="UniProtKB-ARBA"/>
</dbReference>
<dbReference type="Gene3D" id="3.40.50.2000">
    <property type="entry name" value="Glycogen Phosphorylase B"/>
    <property type="match status" value="2"/>
</dbReference>
<dbReference type="InterPro" id="IPR010610">
    <property type="entry name" value="EryCIII-like_C"/>
</dbReference>
<dbReference type="InterPro" id="IPR050426">
    <property type="entry name" value="Glycosyltransferase_28"/>
</dbReference>
<dbReference type="PANTHER" id="PTHR48050">
    <property type="entry name" value="STEROL 3-BETA-GLUCOSYLTRANSFERASE"/>
    <property type="match status" value="1"/>
</dbReference>
<dbReference type="PANTHER" id="PTHR48050:SF13">
    <property type="entry name" value="STEROL 3-BETA-GLUCOSYLTRANSFERASE UGT80A2"/>
    <property type="match status" value="1"/>
</dbReference>
<dbReference type="Pfam" id="PF06722">
    <property type="entry name" value="EryCIII-like_C"/>
    <property type="match status" value="1"/>
</dbReference>
<dbReference type="SUPFAM" id="SSF53756">
    <property type="entry name" value="UDP-Glycosyltransferase/glycogen phosphorylase"/>
    <property type="match status" value="1"/>
</dbReference>
<feature type="chain" id="PRO_0000461020" description="UDP-glucosyltransferase avaP">
    <location>
        <begin position="1"/>
        <end position="453"/>
    </location>
</feature>
<accession>P9WEL7</accession>
<reference key="1">
    <citation type="journal article" date="2023" name="Nat. Chem. Biol.">
        <title>Genome mining for unknown-unknown natural products.</title>
        <authorList>
            <person name="Yee D.A."/>
            <person name="Niwa K."/>
            <person name="Perlatti B."/>
            <person name="Chen M."/>
            <person name="Li Y."/>
            <person name="Tang Y."/>
        </authorList>
    </citation>
    <scope>NUCLEOTIDE SEQUENCE [GENOMIC DNA]</scope>
    <scope>FUNCTION</scope>
    <source>
        <strain>dI-29</strain>
    </source>
</reference>
<protein>
    <recommendedName>
        <fullName evidence="2">UDP-glucosyltransferase avaP</fullName>
        <ecNumber evidence="3">2.4.1.-</ecNumber>
    </recommendedName>
    <alternativeName>
        <fullName evidence="2">Ava biosynthesis cluster protein P</fullName>
    </alternativeName>
</protein>